<evidence type="ECO:0000255" key="1">
    <source>
        <dbReference type="HAMAP-Rule" id="MF_01820"/>
    </source>
</evidence>
<evidence type="ECO:0000255" key="2">
    <source>
        <dbReference type="PROSITE-ProRule" id="PRU01058"/>
    </source>
</evidence>
<accession>Q03FX9</accession>
<keyword id="KW-0963">Cytoplasm</keyword>
<keyword id="KW-0342">GTP-binding</keyword>
<keyword id="KW-0378">Hydrolase</keyword>
<keyword id="KW-0479">Metal-binding</keyword>
<keyword id="KW-0547">Nucleotide-binding</keyword>
<keyword id="KW-0690">Ribosome biogenesis</keyword>
<keyword id="KW-0694">RNA-binding</keyword>
<keyword id="KW-0699">rRNA-binding</keyword>
<keyword id="KW-0862">Zinc</keyword>
<reference key="1">
    <citation type="journal article" date="2006" name="Proc. Natl. Acad. Sci. U.S.A.">
        <title>Comparative genomics of the lactic acid bacteria.</title>
        <authorList>
            <person name="Makarova K.S."/>
            <person name="Slesarev A."/>
            <person name="Wolf Y.I."/>
            <person name="Sorokin A."/>
            <person name="Mirkin B."/>
            <person name="Koonin E.V."/>
            <person name="Pavlov A."/>
            <person name="Pavlova N."/>
            <person name="Karamychev V."/>
            <person name="Polouchine N."/>
            <person name="Shakhova V."/>
            <person name="Grigoriev I."/>
            <person name="Lou Y."/>
            <person name="Rohksar D."/>
            <person name="Lucas S."/>
            <person name="Huang K."/>
            <person name="Goodstein D.M."/>
            <person name="Hawkins T."/>
            <person name="Plengvidhya V."/>
            <person name="Welker D."/>
            <person name="Hughes J."/>
            <person name="Goh Y."/>
            <person name="Benson A."/>
            <person name="Baldwin K."/>
            <person name="Lee J.-H."/>
            <person name="Diaz-Muniz I."/>
            <person name="Dosti B."/>
            <person name="Smeianov V."/>
            <person name="Wechter W."/>
            <person name="Barabote R."/>
            <person name="Lorca G."/>
            <person name="Altermann E."/>
            <person name="Barrangou R."/>
            <person name="Ganesan B."/>
            <person name="Xie Y."/>
            <person name="Rawsthorne H."/>
            <person name="Tamir D."/>
            <person name="Parker C."/>
            <person name="Breidt F."/>
            <person name="Broadbent J.R."/>
            <person name="Hutkins R."/>
            <person name="O'Sullivan D."/>
            <person name="Steele J."/>
            <person name="Unlu G."/>
            <person name="Saier M.H. Jr."/>
            <person name="Klaenhammer T."/>
            <person name="Richardson P."/>
            <person name="Kozyavkin S."/>
            <person name="Weimer B.C."/>
            <person name="Mills D.A."/>
        </authorList>
    </citation>
    <scope>NUCLEOTIDE SEQUENCE [LARGE SCALE GENOMIC DNA]</scope>
    <source>
        <strain>ATCC 25745 / CCUG 21536 / LMG 10740 / 183-1w</strain>
    </source>
</reference>
<proteinExistence type="inferred from homology"/>
<name>RSGA_PEDPA</name>
<dbReference type="EC" id="3.6.1.-" evidence="1"/>
<dbReference type="EMBL" id="CP000422">
    <property type="protein sequence ID" value="ABJ67893.1"/>
    <property type="molecule type" value="Genomic_DNA"/>
</dbReference>
<dbReference type="RefSeq" id="WP_011673289.1">
    <property type="nucleotide sequence ID" value="NC_008525.1"/>
</dbReference>
<dbReference type="SMR" id="Q03FX9"/>
<dbReference type="STRING" id="278197.PEPE_0833"/>
<dbReference type="GeneID" id="33062305"/>
<dbReference type="KEGG" id="ppe:PEPE_0833"/>
<dbReference type="eggNOG" id="COG1162">
    <property type="taxonomic scope" value="Bacteria"/>
</dbReference>
<dbReference type="HOGENOM" id="CLU_033617_2_1_9"/>
<dbReference type="OrthoDB" id="9809485at2"/>
<dbReference type="Proteomes" id="UP000000773">
    <property type="component" value="Chromosome"/>
</dbReference>
<dbReference type="GO" id="GO:0005737">
    <property type="term" value="C:cytoplasm"/>
    <property type="evidence" value="ECO:0007669"/>
    <property type="project" value="UniProtKB-SubCell"/>
</dbReference>
<dbReference type="GO" id="GO:0005525">
    <property type="term" value="F:GTP binding"/>
    <property type="evidence" value="ECO:0007669"/>
    <property type="project" value="UniProtKB-UniRule"/>
</dbReference>
<dbReference type="GO" id="GO:0003924">
    <property type="term" value="F:GTPase activity"/>
    <property type="evidence" value="ECO:0007669"/>
    <property type="project" value="UniProtKB-UniRule"/>
</dbReference>
<dbReference type="GO" id="GO:0046872">
    <property type="term" value="F:metal ion binding"/>
    <property type="evidence" value="ECO:0007669"/>
    <property type="project" value="UniProtKB-KW"/>
</dbReference>
<dbReference type="GO" id="GO:0019843">
    <property type="term" value="F:rRNA binding"/>
    <property type="evidence" value="ECO:0007669"/>
    <property type="project" value="UniProtKB-KW"/>
</dbReference>
<dbReference type="GO" id="GO:0042274">
    <property type="term" value="P:ribosomal small subunit biogenesis"/>
    <property type="evidence" value="ECO:0007669"/>
    <property type="project" value="UniProtKB-UniRule"/>
</dbReference>
<dbReference type="CDD" id="cd04466">
    <property type="entry name" value="S1_YloQ_GTPase"/>
    <property type="match status" value="1"/>
</dbReference>
<dbReference type="CDD" id="cd01854">
    <property type="entry name" value="YjeQ_EngC"/>
    <property type="match status" value="1"/>
</dbReference>
<dbReference type="Gene3D" id="2.40.50.140">
    <property type="entry name" value="Nucleic acid-binding proteins"/>
    <property type="match status" value="1"/>
</dbReference>
<dbReference type="Gene3D" id="3.40.50.300">
    <property type="entry name" value="P-loop containing nucleotide triphosphate hydrolases"/>
    <property type="match status" value="1"/>
</dbReference>
<dbReference type="Gene3D" id="1.10.40.50">
    <property type="entry name" value="Probable gtpase engc, domain 3"/>
    <property type="match status" value="1"/>
</dbReference>
<dbReference type="HAMAP" id="MF_01820">
    <property type="entry name" value="GTPase_RsgA"/>
    <property type="match status" value="1"/>
</dbReference>
<dbReference type="InterPro" id="IPR030378">
    <property type="entry name" value="G_CP_dom"/>
</dbReference>
<dbReference type="InterPro" id="IPR012340">
    <property type="entry name" value="NA-bd_OB-fold"/>
</dbReference>
<dbReference type="InterPro" id="IPR027417">
    <property type="entry name" value="P-loop_NTPase"/>
</dbReference>
<dbReference type="InterPro" id="IPR004881">
    <property type="entry name" value="Ribosome_biogen_GTPase_RsgA"/>
</dbReference>
<dbReference type="InterPro" id="IPR010914">
    <property type="entry name" value="RsgA_GTPase_dom"/>
</dbReference>
<dbReference type="InterPro" id="IPR031944">
    <property type="entry name" value="RsgA_N"/>
</dbReference>
<dbReference type="NCBIfam" id="TIGR00157">
    <property type="entry name" value="ribosome small subunit-dependent GTPase A"/>
    <property type="match status" value="1"/>
</dbReference>
<dbReference type="PANTHER" id="PTHR32120">
    <property type="entry name" value="SMALL RIBOSOMAL SUBUNIT BIOGENESIS GTPASE RSGA"/>
    <property type="match status" value="1"/>
</dbReference>
<dbReference type="PANTHER" id="PTHR32120:SF11">
    <property type="entry name" value="SMALL RIBOSOMAL SUBUNIT BIOGENESIS GTPASE RSGA 1, MITOCHONDRIAL-RELATED"/>
    <property type="match status" value="1"/>
</dbReference>
<dbReference type="Pfam" id="PF03193">
    <property type="entry name" value="RsgA_GTPase"/>
    <property type="match status" value="1"/>
</dbReference>
<dbReference type="Pfam" id="PF16745">
    <property type="entry name" value="RsgA_N"/>
    <property type="match status" value="1"/>
</dbReference>
<dbReference type="SUPFAM" id="SSF50249">
    <property type="entry name" value="Nucleic acid-binding proteins"/>
    <property type="match status" value="1"/>
</dbReference>
<dbReference type="SUPFAM" id="SSF52540">
    <property type="entry name" value="P-loop containing nucleoside triphosphate hydrolases"/>
    <property type="match status" value="1"/>
</dbReference>
<dbReference type="PROSITE" id="PS50936">
    <property type="entry name" value="ENGC_GTPASE"/>
    <property type="match status" value="1"/>
</dbReference>
<dbReference type="PROSITE" id="PS51721">
    <property type="entry name" value="G_CP"/>
    <property type="match status" value="1"/>
</dbReference>
<gene>
    <name evidence="1" type="primary">rsgA</name>
    <name type="ordered locus">PEPE_0833</name>
</gene>
<feature type="chain" id="PRO_1000188112" description="Small ribosomal subunit biogenesis GTPase RsgA">
    <location>
        <begin position="1"/>
        <end position="309"/>
    </location>
</feature>
<feature type="domain" description="CP-type G" evidence="2">
    <location>
        <begin position="64"/>
        <end position="225"/>
    </location>
</feature>
<feature type="binding site" evidence="1">
    <location>
        <begin position="113"/>
        <end position="116"/>
    </location>
    <ligand>
        <name>GTP</name>
        <dbReference type="ChEBI" id="CHEBI:37565"/>
    </ligand>
</feature>
<feature type="binding site" evidence="1">
    <location>
        <begin position="168"/>
        <end position="176"/>
    </location>
    <ligand>
        <name>GTP</name>
        <dbReference type="ChEBI" id="CHEBI:37565"/>
    </ligand>
</feature>
<feature type="binding site" evidence="1">
    <location>
        <position position="249"/>
    </location>
    <ligand>
        <name>Zn(2+)</name>
        <dbReference type="ChEBI" id="CHEBI:29105"/>
    </ligand>
</feature>
<feature type="binding site" evidence="1">
    <location>
        <position position="254"/>
    </location>
    <ligand>
        <name>Zn(2+)</name>
        <dbReference type="ChEBI" id="CHEBI:29105"/>
    </ligand>
</feature>
<feature type="binding site" evidence="1">
    <location>
        <position position="256"/>
    </location>
    <ligand>
        <name>Zn(2+)</name>
        <dbReference type="ChEBI" id="CHEBI:29105"/>
    </ligand>
</feature>
<feature type="binding site" evidence="1">
    <location>
        <position position="262"/>
    </location>
    <ligand>
        <name>Zn(2+)</name>
        <dbReference type="ChEBI" id="CHEBI:29105"/>
    </ligand>
</feature>
<protein>
    <recommendedName>
        <fullName evidence="1">Small ribosomal subunit biogenesis GTPase RsgA</fullName>
        <ecNumber evidence="1">3.6.1.-</ecNumber>
    </recommendedName>
</protein>
<comment type="function">
    <text evidence="1">One of several proteins that assist in the late maturation steps of the functional core of the 30S ribosomal subunit. Helps release RbfA from mature subunits. May play a role in the assembly of ribosomal proteins into the subunit. Circularly permuted GTPase that catalyzes slow GTP hydrolysis, GTPase activity is stimulated by the 30S ribosomal subunit.</text>
</comment>
<comment type="cofactor">
    <cofactor evidence="1">
        <name>Zn(2+)</name>
        <dbReference type="ChEBI" id="CHEBI:29105"/>
    </cofactor>
    <text evidence="1">Binds 1 zinc ion per subunit.</text>
</comment>
<comment type="subunit">
    <text evidence="1">Monomer. Associates with 30S ribosomal subunit, binds 16S rRNA.</text>
</comment>
<comment type="subcellular location">
    <subcellularLocation>
        <location evidence="1">Cytoplasm</location>
    </subcellularLocation>
</comment>
<comment type="similarity">
    <text evidence="1">Belongs to the TRAFAC class YlqF/YawG GTPase family. RsgA subfamily.</text>
</comment>
<sequence length="309" mass="35064">MHTGQIIQLLAGFYDVLTEDHKIVRTRARGNFRNQKTSPLVGDMVDFKESENDTGYITKIHTRENELVRPPLANIDQAVIVTAATEPSFSANLLDRQLVALAEKHIEAILYFSKTDLLSPTEFQDLQKIAGYYQKIGYQVIFPISSQPDADLIELKESFKNQLTIFMGQTGAGKSTLLNRIDSKLNIATGEVSQALNRGKHTTRKVSLIPIEDGLVADTPGFSTYAVFEMADTQLKEYFIDFKKLSQNCRFRECLHLNEPGCAVKAAVEDGSVLSSRYANYEQFIELIRNQKPEYKRKGYQKKDRRKKK</sequence>
<organism>
    <name type="scientific">Pediococcus pentosaceus (strain ATCC 25745 / CCUG 21536 / LMG 10740 / 183-1w)</name>
    <dbReference type="NCBI Taxonomy" id="278197"/>
    <lineage>
        <taxon>Bacteria</taxon>
        <taxon>Bacillati</taxon>
        <taxon>Bacillota</taxon>
        <taxon>Bacilli</taxon>
        <taxon>Lactobacillales</taxon>
        <taxon>Lactobacillaceae</taxon>
        <taxon>Pediococcus</taxon>
    </lineage>
</organism>